<name>RL25_CAUVN</name>
<accession>B8GZU9</accession>
<comment type="function">
    <text evidence="1">This is one of the proteins that binds to the 5S RNA in the ribosome where it forms part of the central protuberance.</text>
</comment>
<comment type="subunit">
    <text evidence="1">Part of the 50S ribosomal subunit; part of the 5S rRNA/L5/L18/L25 subcomplex. Contacts the 5S rRNA. Binds to the 5S rRNA independently of L5 and L18.</text>
</comment>
<comment type="similarity">
    <text evidence="1">Belongs to the bacterial ribosomal protein bL25 family. CTC subfamily.</text>
</comment>
<protein>
    <recommendedName>
        <fullName evidence="1">Large ribosomal subunit protein bL25</fullName>
    </recommendedName>
    <alternativeName>
        <fullName evidence="2">50S ribosomal protein L25</fullName>
    </alternativeName>
    <alternativeName>
        <fullName evidence="1">General stress protein CTC</fullName>
    </alternativeName>
</protein>
<proteinExistence type="inferred from homology"/>
<gene>
    <name evidence="1" type="primary">rplY</name>
    <name evidence="1" type="synonym">ctc</name>
    <name type="ordered locus">CCNA_00518</name>
</gene>
<feature type="chain" id="PRO_1000166167" description="Large ribosomal subunit protein bL25">
    <location>
        <begin position="1"/>
        <end position="197"/>
    </location>
</feature>
<sequence>MAEIILNVEVRDGAGTGNARATRRAGKVPGVLYGGGKAPVNIAVKANEFRKSLYTGKLLGHLVTLQYGEEKQSVIAKAVQFHPVTDEPVHFDLYRVDEHQLIKIEVPVHFKNHETSVGLKKGGTLEVIRHTVELACPADKIPEELVIDLAGHDIGDVIRISEVKLPEGVKPAMDRDFVIANVKASSAAQSDAGDTTA</sequence>
<dbReference type="EMBL" id="CP001340">
    <property type="protein sequence ID" value="ACL93983.1"/>
    <property type="molecule type" value="Genomic_DNA"/>
</dbReference>
<dbReference type="RefSeq" id="WP_010918373.1">
    <property type="nucleotide sequence ID" value="NC_011916.1"/>
</dbReference>
<dbReference type="RefSeq" id="YP_002515891.1">
    <property type="nucleotide sequence ID" value="NC_011916.1"/>
</dbReference>
<dbReference type="SMR" id="B8GZU9"/>
<dbReference type="GeneID" id="7332208"/>
<dbReference type="KEGG" id="ccs:CCNA_00518"/>
<dbReference type="PATRIC" id="fig|565050.3.peg.509"/>
<dbReference type="HOGENOM" id="CLU_075939_0_0_5"/>
<dbReference type="OrthoDB" id="9806411at2"/>
<dbReference type="PhylomeDB" id="B8GZU9"/>
<dbReference type="Proteomes" id="UP000001364">
    <property type="component" value="Chromosome"/>
</dbReference>
<dbReference type="GO" id="GO:0022625">
    <property type="term" value="C:cytosolic large ribosomal subunit"/>
    <property type="evidence" value="ECO:0007669"/>
    <property type="project" value="TreeGrafter"/>
</dbReference>
<dbReference type="GO" id="GO:0008097">
    <property type="term" value="F:5S rRNA binding"/>
    <property type="evidence" value="ECO:0007669"/>
    <property type="project" value="InterPro"/>
</dbReference>
<dbReference type="GO" id="GO:0003735">
    <property type="term" value="F:structural constituent of ribosome"/>
    <property type="evidence" value="ECO:0007669"/>
    <property type="project" value="InterPro"/>
</dbReference>
<dbReference type="GO" id="GO:0006412">
    <property type="term" value="P:translation"/>
    <property type="evidence" value="ECO:0007669"/>
    <property type="project" value="UniProtKB-UniRule"/>
</dbReference>
<dbReference type="CDD" id="cd00495">
    <property type="entry name" value="Ribosomal_L25_TL5_CTC"/>
    <property type="match status" value="1"/>
</dbReference>
<dbReference type="Gene3D" id="2.170.120.20">
    <property type="entry name" value="Ribosomal protein L25, beta domain"/>
    <property type="match status" value="1"/>
</dbReference>
<dbReference type="Gene3D" id="2.40.240.10">
    <property type="entry name" value="Ribosomal Protein L25, Chain P"/>
    <property type="match status" value="1"/>
</dbReference>
<dbReference type="HAMAP" id="MF_01334">
    <property type="entry name" value="Ribosomal_bL25_CTC"/>
    <property type="match status" value="1"/>
</dbReference>
<dbReference type="InterPro" id="IPR020056">
    <property type="entry name" value="Rbsml_bL25/Gln-tRNA_synth_N"/>
</dbReference>
<dbReference type="InterPro" id="IPR011035">
    <property type="entry name" value="Ribosomal_bL25/Gln-tRNA_synth"/>
</dbReference>
<dbReference type="InterPro" id="IPR020057">
    <property type="entry name" value="Ribosomal_bL25_b-dom"/>
</dbReference>
<dbReference type="InterPro" id="IPR037121">
    <property type="entry name" value="Ribosomal_bL25_C"/>
</dbReference>
<dbReference type="InterPro" id="IPR001021">
    <property type="entry name" value="Ribosomal_bL25_long"/>
</dbReference>
<dbReference type="InterPro" id="IPR029751">
    <property type="entry name" value="Ribosomal_L25_dom"/>
</dbReference>
<dbReference type="InterPro" id="IPR020930">
    <property type="entry name" value="Ribosomal_uL5_bac-type"/>
</dbReference>
<dbReference type="NCBIfam" id="TIGR00731">
    <property type="entry name" value="bL25_bact_ctc"/>
    <property type="match status" value="1"/>
</dbReference>
<dbReference type="NCBIfam" id="NF004128">
    <property type="entry name" value="PRK05618.1-2"/>
    <property type="match status" value="1"/>
</dbReference>
<dbReference type="PANTHER" id="PTHR33284">
    <property type="entry name" value="RIBOSOMAL PROTEIN L25/GLN-TRNA SYNTHETASE, ANTI-CODON-BINDING DOMAIN-CONTAINING PROTEIN"/>
    <property type="match status" value="1"/>
</dbReference>
<dbReference type="PANTHER" id="PTHR33284:SF1">
    <property type="entry name" value="RIBOSOMAL PROTEIN L25_GLN-TRNA SYNTHETASE, ANTI-CODON-BINDING DOMAIN-CONTAINING PROTEIN"/>
    <property type="match status" value="1"/>
</dbReference>
<dbReference type="Pfam" id="PF01386">
    <property type="entry name" value="Ribosomal_L25p"/>
    <property type="match status" value="1"/>
</dbReference>
<dbReference type="Pfam" id="PF14693">
    <property type="entry name" value="Ribosomal_TL5_C"/>
    <property type="match status" value="1"/>
</dbReference>
<dbReference type="SUPFAM" id="SSF50715">
    <property type="entry name" value="Ribosomal protein L25-like"/>
    <property type="match status" value="1"/>
</dbReference>
<organism>
    <name type="scientific">Caulobacter vibrioides (strain NA1000 / CB15N)</name>
    <name type="common">Caulobacter crescentus</name>
    <dbReference type="NCBI Taxonomy" id="565050"/>
    <lineage>
        <taxon>Bacteria</taxon>
        <taxon>Pseudomonadati</taxon>
        <taxon>Pseudomonadota</taxon>
        <taxon>Alphaproteobacteria</taxon>
        <taxon>Caulobacterales</taxon>
        <taxon>Caulobacteraceae</taxon>
        <taxon>Caulobacter</taxon>
    </lineage>
</organism>
<evidence type="ECO:0000255" key="1">
    <source>
        <dbReference type="HAMAP-Rule" id="MF_01334"/>
    </source>
</evidence>
<evidence type="ECO:0000305" key="2"/>
<reference key="1">
    <citation type="journal article" date="2010" name="J. Bacteriol.">
        <title>The genetic basis of laboratory adaptation in Caulobacter crescentus.</title>
        <authorList>
            <person name="Marks M.E."/>
            <person name="Castro-Rojas C.M."/>
            <person name="Teiling C."/>
            <person name="Du L."/>
            <person name="Kapatral V."/>
            <person name="Walunas T.L."/>
            <person name="Crosson S."/>
        </authorList>
    </citation>
    <scope>NUCLEOTIDE SEQUENCE [LARGE SCALE GENOMIC DNA]</scope>
    <source>
        <strain>NA1000 / CB15N</strain>
    </source>
</reference>
<keyword id="KW-1185">Reference proteome</keyword>
<keyword id="KW-0687">Ribonucleoprotein</keyword>
<keyword id="KW-0689">Ribosomal protein</keyword>
<keyword id="KW-0694">RNA-binding</keyword>
<keyword id="KW-0699">rRNA-binding</keyword>